<sequence>MKLLKGLPVAKDVRVAIVGACFNAPIADRLVSGARETFFESGGSPDSLTVVRVPGAFEIPCAIKKMLSKGNLFQAIVACGVLIQGETSHYEHIADNVAAGIARLSVEFCLPITFSVITAPNVEAAWERAGIKGPNLGASGMRTALEMASLFSLIEKE</sequence>
<comment type="function">
    <text evidence="1">Catalyzes the formation of 6,7-dimethyl-8-ribityllumazine by condensation of 5-amino-6-(D-ribitylamino)uracil with 3,4-dihydroxy-2-butanone 4-phosphate. This is the penultimate step in the biosynthesis of riboflavin.</text>
</comment>
<comment type="catalytic activity">
    <reaction evidence="1">
        <text>(2S)-2-hydroxy-3-oxobutyl phosphate + 5-amino-6-(D-ribitylamino)uracil = 6,7-dimethyl-8-(1-D-ribityl)lumazine + phosphate + 2 H2O + H(+)</text>
        <dbReference type="Rhea" id="RHEA:26152"/>
        <dbReference type="ChEBI" id="CHEBI:15377"/>
        <dbReference type="ChEBI" id="CHEBI:15378"/>
        <dbReference type="ChEBI" id="CHEBI:15934"/>
        <dbReference type="ChEBI" id="CHEBI:43474"/>
        <dbReference type="ChEBI" id="CHEBI:58201"/>
        <dbReference type="ChEBI" id="CHEBI:58830"/>
        <dbReference type="EC" id="2.5.1.78"/>
    </reaction>
</comment>
<comment type="pathway">
    <text evidence="1">Cofactor biosynthesis; riboflavin biosynthesis; riboflavin from 2-hydroxy-3-oxobutyl phosphate and 5-amino-6-(D-ribitylamino)uracil: step 1/2.</text>
</comment>
<comment type="similarity">
    <text evidence="1">Belongs to the DMRL synthase family.</text>
</comment>
<evidence type="ECO:0000255" key="1">
    <source>
        <dbReference type="HAMAP-Rule" id="MF_00178"/>
    </source>
</evidence>
<protein>
    <recommendedName>
        <fullName evidence="1">6,7-dimethyl-8-ribityllumazine synthase</fullName>
        <shortName evidence="1">DMRL synthase</shortName>
        <shortName evidence="1">LS</shortName>
        <shortName evidence="1">Lumazine synthase</shortName>
        <ecNumber evidence="1">2.5.1.78</ecNumber>
    </recommendedName>
</protein>
<proteinExistence type="inferred from homology"/>
<name>RISB_CHLMU</name>
<gene>
    <name evidence="1" type="primary">ribH</name>
    <name type="ordered locus">TC_0105</name>
</gene>
<dbReference type="EC" id="2.5.1.78" evidence="1"/>
<dbReference type="EMBL" id="AE002160">
    <property type="protein sequence ID" value="AAF38985.1"/>
    <property type="molecule type" value="Genomic_DNA"/>
</dbReference>
<dbReference type="PIR" id="C81740">
    <property type="entry name" value="C81740"/>
</dbReference>
<dbReference type="RefSeq" id="WP_010229385.1">
    <property type="nucleotide sequence ID" value="NZ_CP063055.1"/>
</dbReference>
<dbReference type="SMR" id="Q9PLJ4"/>
<dbReference type="GeneID" id="1245635"/>
<dbReference type="KEGG" id="cmu:TC_0105"/>
<dbReference type="eggNOG" id="COG0054">
    <property type="taxonomic scope" value="Bacteria"/>
</dbReference>
<dbReference type="HOGENOM" id="CLU_089358_1_1_0"/>
<dbReference type="OrthoDB" id="9809709at2"/>
<dbReference type="BRENDA" id="2.5.1.78">
    <property type="organism ID" value="1310"/>
</dbReference>
<dbReference type="UniPathway" id="UPA00275">
    <property type="reaction ID" value="UER00404"/>
</dbReference>
<dbReference type="Proteomes" id="UP000000800">
    <property type="component" value="Chromosome"/>
</dbReference>
<dbReference type="GO" id="GO:0005829">
    <property type="term" value="C:cytosol"/>
    <property type="evidence" value="ECO:0007669"/>
    <property type="project" value="TreeGrafter"/>
</dbReference>
<dbReference type="GO" id="GO:0009349">
    <property type="term" value="C:riboflavin synthase complex"/>
    <property type="evidence" value="ECO:0007669"/>
    <property type="project" value="InterPro"/>
</dbReference>
<dbReference type="GO" id="GO:0000906">
    <property type="term" value="F:6,7-dimethyl-8-ribityllumazine synthase activity"/>
    <property type="evidence" value="ECO:0007669"/>
    <property type="project" value="UniProtKB-UniRule"/>
</dbReference>
<dbReference type="GO" id="GO:0009231">
    <property type="term" value="P:riboflavin biosynthetic process"/>
    <property type="evidence" value="ECO:0007669"/>
    <property type="project" value="UniProtKB-UniRule"/>
</dbReference>
<dbReference type="CDD" id="cd09209">
    <property type="entry name" value="Lumazine_synthase-I"/>
    <property type="match status" value="1"/>
</dbReference>
<dbReference type="Gene3D" id="3.40.50.960">
    <property type="entry name" value="Lumazine/riboflavin synthase"/>
    <property type="match status" value="1"/>
</dbReference>
<dbReference type="HAMAP" id="MF_00178">
    <property type="entry name" value="Lumazine_synth"/>
    <property type="match status" value="1"/>
</dbReference>
<dbReference type="InterPro" id="IPR034964">
    <property type="entry name" value="LS"/>
</dbReference>
<dbReference type="InterPro" id="IPR002180">
    <property type="entry name" value="LS/RS"/>
</dbReference>
<dbReference type="InterPro" id="IPR036467">
    <property type="entry name" value="LS/RS_sf"/>
</dbReference>
<dbReference type="NCBIfam" id="TIGR00114">
    <property type="entry name" value="lumazine-synth"/>
    <property type="match status" value="1"/>
</dbReference>
<dbReference type="PANTHER" id="PTHR21058:SF0">
    <property type="entry name" value="6,7-DIMETHYL-8-RIBITYLLUMAZINE SYNTHASE"/>
    <property type="match status" value="1"/>
</dbReference>
<dbReference type="PANTHER" id="PTHR21058">
    <property type="entry name" value="6,7-DIMETHYL-8-RIBITYLLUMAZINE SYNTHASE DMRL SYNTHASE LUMAZINE SYNTHASE"/>
    <property type="match status" value="1"/>
</dbReference>
<dbReference type="Pfam" id="PF00885">
    <property type="entry name" value="DMRL_synthase"/>
    <property type="match status" value="1"/>
</dbReference>
<dbReference type="SUPFAM" id="SSF52121">
    <property type="entry name" value="Lumazine synthase"/>
    <property type="match status" value="1"/>
</dbReference>
<reference key="1">
    <citation type="journal article" date="2000" name="Nucleic Acids Res.">
        <title>Genome sequences of Chlamydia trachomatis MoPn and Chlamydia pneumoniae AR39.</title>
        <authorList>
            <person name="Read T.D."/>
            <person name="Brunham R.C."/>
            <person name="Shen C."/>
            <person name="Gill S.R."/>
            <person name="Heidelberg J.F."/>
            <person name="White O."/>
            <person name="Hickey E.K."/>
            <person name="Peterson J.D."/>
            <person name="Utterback T.R."/>
            <person name="Berry K.J."/>
            <person name="Bass S."/>
            <person name="Linher K.D."/>
            <person name="Weidman J.F."/>
            <person name="Khouri H.M."/>
            <person name="Craven B."/>
            <person name="Bowman C."/>
            <person name="Dodson R.J."/>
            <person name="Gwinn M.L."/>
            <person name="Nelson W.C."/>
            <person name="DeBoy R.T."/>
            <person name="Kolonay J.F."/>
            <person name="McClarty G."/>
            <person name="Salzberg S.L."/>
            <person name="Eisen J.A."/>
            <person name="Fraser C.M."/>
        </authorList>
    </citation>
    <scope>NUCLEOTIDE SEQUENCE [LARGE SCALE GENOMIC DNA]</scope>
    <source>
        <strain>MoPn / Nigg</strain>
    </source>
</reference>
<feature type="chain" id="PRO_0000134738" description="6,7-dimethyl-8-ribityllumazine synthase">
    <location>
        <begin position="1"/>
        <end position="157"/>
    </location>
</feature>
<feature type="active site" description="Proton donor" evidence="1">
    <location>
        <position position="89"/>
    </location>
</feature>
<feature type="binding site" evidence="1">
    <location>
        <position position="22"/>
    </location>
    <ligand>
        <name>5-amino-6-(D-ribitylamino)uracil</name>
        <dbReference type="ChEBI" id="CHEBI:15934"/>
    </ligand>
</feature>
<feature type="binding site" evidence="1">
    <location>
        <begin position="56"/>
        <end position="58"/>
    </location>
    <ligand>
        <name>5-amino-6-(D-ribitylamino)uracil</name>
        <dbReference type="ChEBI" id="CHEBI:15934"/>
    </ligand>
</feature>
<feature type="binding site" evidence="1">
    <location>
        <begin position="81"/>
        <end position="83"/>
    </location>
    <ligand>
        <name>5-amino-6-(D-ribitylamino)uracil</name>
        <dbReference type="ChEBI" id="CHEBI:15934"/>
    </ligand>
</feature>
<feature type="binding site" evidence="1">
    <location>
        <begin position="86"/>
        <end position="87"/>
    </location>
    <ligand>
        <name>(2S)-2-hydroxy-3-oxobutyl phosphate</name>
        <dbReference type="ChEBI" id="CHEBI:58830"/>
    </ligand>
</feature>
<feature type="binding site" evidence="1">
    <location>
        <position position="114"/>
    </location>
    <ligand>
        <name>5-amino-6-(D-ribitylamino)uracil</name>
        <dbReference type="ChEBI" id="CHEBI:15934"/>
    </ligand>
</feature>
<feature type="binding site" evidence="1">
    <location>
        <position position="128"/>
    </location>
    <ligand>
        <name>(2S)-2-hydroxy-3-oxobutyl phosphate</name>
        <dbReference type="ChEBI" id="CHEBI:58830"/>
    </ligand>
</feature>
<accession>Q9PLJ4</accession>
<keyword id="KW-0686">Riboflavin biosynthesis</keyword>
<keyword id="KW-0808">Transferase</keyword>
<organism>
    <name type="scientific">Chlamydia muridarum (strain MoPn / Nigg)</name>
    <dbReference type="NCBI Taxonomy" id="243161"/>
    <lineage>
        <taxon>Bacteria</taxon>
        <taxon>Pseudomonadati</taxon>
        <taxon>Chlamydiota</taxon>
        <taxon>Chlamydiia</taxon>
        <taxon>Chlamydiales</taxon>
        <taxon>Chlamydiaceae</taxon>
        <taxon>Chlamydia/Chlamydophila group</taxon>
        <taxon>Chlamydia</taxon>
    </lineage>
</organism>